<dbReference type="EMBL" id="D16313">
    <property type="protein sequence ID" value="BAA03821.1"/>
    <property type="molecule type" value="Genomic_DNA"/>
</dbReference>
<dbReference type="EMBL" id="BC057934">
    <property type="protein sequence ID" value="AAH57934.1"/>
    <property type="molecule type" value="mRNA"/>
</dbReference>
<dbReference type="PIR" id="I49595">
    <property type="entry name" value="I49595"/>
</dbReference>
<dbReference type="RefSeq" id="NP_032495.2">
    <property type="nucleotide sequence ID" value="NM_008469.2"/>
</dbReference>
<dbReference type="SMR" id="Q61414"/>
<dbReference type="BioGRID" id="201020">
    <property type="interactions" value="13"/>
</dbReference>
<dbReference type="FunCoup" id="Q61414">
    <property type="interactions" value="172"/>
</dbReference>
<dbReference type="IntAct" id="Q61414">
    <property type="interactions" value="1"/>
</dbReference>
<dbReference type="STRING" id="10090.ENSMUSP00000103034"/>
<dbReference type="GlyGen" id="Q61414">
    <property type="glycosylation" value="1 site, 1 O-linked glycan (1 site)"/>
</dbReference>
<dbReference type="iPTMnet" id="Q61414"/>
<dbReference type="PhosphoSitePlus" id="Q61414"/>
<dbReference type="CPTAC" id="non-CPTAC-3463"/>
<dbReference type="jPOST" id="Q61414"/>
<dbReference type="PaxDb" id="10090-ENSMUSP00000103034"/>
<dbReference type="ProteomicsDB" id="269161"/>
<dbReference type="DNASU" id="16665"/>
<dbReference type="GeneID" id="16665"/>
<dbReference type="KEGG" id="mmu:16665"/>
<dbReference type="AGR" id="MGI:96689"/>
<dbReference type="CTD" id="3866"/>
<dbReference type="MGI" id="MGI:96689">
    <property type="gene designation" value="Krt15"/>
</dbReference>
<dbReference type="eggNOG" id="ENOG502QTM6">
    <property type="taxonomic scope" value="Eukaryota"/>
</dbReference>
<dbReference type="InParanoid" id="Q61414"/>
<dbReference type="OrthoDB" id="2441647at2759"/>
<dbReference type="Reactome" id="R-MMU-6805567">
    <property type="pathway name" value="Keratinization"/>
</dbReference>
<dbReference type="Reactome" id="R-MMU-6809371">
    <property type="pathway name" value="Formation of the cornified envelope"/>
</dbReference>
<dbReference type="BioGRID-ORCS" id="16665">
    <property type="hits" value="3 hits in 78 CRISPR screens"/>
</dbReference>
<dbReference type="ChiTaRS" id="Krt15">
    <property type="organism name" value="mouse"/>
</dbReference>
<dbReference type="PRO" id="PR:Q61414"/>
<dbReference type="Proteomes" id="UP000000589">
    <property type="component" value="Unplaced"/>
</dbReference>
<dbReference type="RNAct" id="Q61414">
    <property type="molecule type" value="protein"/>
</dbReference>
<dbReference type="GO" id="GO:0005882">
    <property type="term" value="C:intermediate filament"/>
    <property type="evidence" value="ECO:0007669"/>
    <property type="project" value="UniProtKB-KW"/>
</dbReference>
<dbReference type="GO" id="GO:0005198">
    <property type="term" value="F:structural molecule activity"/>
    <property type="evidence" value="ECO:0007669"/>
    <property type="project" value="InterPro"/>
</dbReference>
<dbReference type="FunFam" id="1.20.5.1160:FF:000002">
    <property type="entry name" value="Type I keratin 10"/>
    <property type="match status" value="1"/>
</dbReference>
<dbReference type="FunFam" id="1.20.5.170:FF:000002">
    <property type="entry name" value="Type I keratin KA11"/>
    <property type="match status" value="1"/>
</dbReference>
<dbReference type="FunFam" id="1.20.5.500:FF:000001">
    <property type="entry name" value="Type II keratin 23"/>
    <property type="match status" value="1"/>
</dbReference>
<dbReference type="Gene3D" id="1.20.5.170">
    <property type="match status" value="1"/>
</dbReference>
<dbReference type="Gene3D" id="1.20.5.500">
    <property type="entry name" value="Single helix bin"/>
    <property type="match status" value="1"/>
</dbReference>
<dbReference type="Gene3D" id="1.20.5.1160">
    <property type="entry name" value="Vasodilator-stimulated phosphoprotein"/>
    <property type="match status" value="1"/>
</dbReference>
<dbReference type="InterPro" id="IPR018039">
    <property type="entry name" value="IF_conserved"/>
</dbReference>
<dbReference type="InterPro" id="IPR039008">
    <property type="entry name" value="IF_rod_dom"/>
</dbReference>
<dbReference type="InterPro" id="IPR002957">
    <property type="entry name" value="Keratin_I"/>
</dbReference>
<dbReference type="PANTHER" id="PTHR23239">
    <property type="entry name" value="INTERMEDIATE FILAMENT"/>
    <property type="match status" value="1"/>
</dbReference>
<dbReference type="PANTHER" id="PTHR23239:SF164">
    <property type="entry name" value="KERATIN, TYPE I CYTOSKELETAL 15"/>
    <property type="match status" value="1"/>
</dbReference>
<dbReference type="Pfam" id="PF00038">
    <property type="entry name" value="Filament"/>
    <property type="match status" value="1"/>
</dbReference>
<dbReference type="PRINTS" id="PR01248">
    <property type="entry name" value="TYPE1KERATIN"/>
</dbReference>
<dbReference type="SMART" id="SM01391">
    <property type="entry name" value="Filament"/>
    <property type="match status" value="1"/>
</dbReference>
<dbReference type="SUPFAM" id="SSF64593">
    <property type="entry name" value="Intermediate filament protein, coiled coil region"/>
    <property type="match status" value="2"/>
</dbReference>
<dbReference type="PROSITE" id="PS00226">
    <property type="entry name" value="IF_ROD_1"/>
    <property type="match status" value="1"/>
</dbReference>
<dbReference type="PROSITE" id="PS51842">
    <property type="entry name" value="IF_ROD_2"/>
    <property type="match status" value="1"/>
</dbReference>
<evidence type="ECO:0000250" key="1">
    <source>
        <dbReference type="UniProtKB" id="P19012"/>
    </source>
</evidence>
<evidence type="ECO:0000250" key="2">
    <source>
        <dbReference type="UniProtKB" id="Q04695"/>
    </source>
</evidence>
<evidence type="ECO:0000250" key="3">
    <source>
        <dbReference type="UniProtKB" id="Q6IFV3"/>
    </source>
</evidence>
<evidence type="ECO:0000255" key="4">
    <source>
        <dbReference type="PROSITE-ProRule" id="PRU01188"/>
    </source>
</evidence>
<evidence type="ECO:0000256" key="5">
    <source>
        <dbReference type="SAM" id="MobiDB-lite"/>
    </source>
</evidence>
<evidence type="ECO:0000269" key="6">
    <source>
    </source>
</evidence>
<evidence type="ECO:0000269" key="7">
    <source>
    </source>
</evidence>
<evidence type="ECO:0000269" key="8">
    <source>
    </source>
</evidence>
<evidence type="ECO:0000269" key="9">
    <source>
    </source>
</evidence>
<evidence type="ECO:0000269" key="10">
    <source>
    </source>
</evidence>
<evidence type="ECO:0000305" key="11"/>
<evidence type="ECO:0000305" key="12">
    <source>
    </source>
</evidence>
<evidence type="ECO:0007744" key="13">
    <source>
    </source>
</evidence>
<feature type="chain" id="PRO_0000063658" description="Keratin, type I cytoskeletal 15">
    <location>
        <begin position="1"/>
        <end position="452"/>
    </location>
</feature>
<feature type="domain" description="IF rod" evidence="4">
    <location>
        <begin position="98"/>
        <end position="410"/>
    </location>
</feature>
<feature type="region of interest" description="Head">
    <location>
        <begin position="1"/>
        <end position="97"/>
    </location>
</feature>
<feature type="region of interest" description="Coil 1A">
    <location>
        <begin position="98"/>
        <end position="133"/>
    </location>
</feature>
<feature type="region of interest" description="Linker 1">
    <location>
        <begin position="134"/>
        <end position="152"/>
    </location>
</feature>
<feature type="region of interest" description="Coil 1B">
    <location>
        <begin position="153"/>
        <end position="244"/>
    </location>
</feature>
<feature type="region of interest" description="Linker 12">
    <location>
        <begin position="245"/>
        <end position="264"/>
    </location>
</feature>
<feature type="region of interest" description="Coil 2">
    <location>
        <begin position="265"/>
        <end position="406"/>
    </location>
</feature>
<feature type="region of interest" description="Tail">
    <location>
        <begin position="407"/>
        <end position="452"/>
    </location>
</feature>
<feature type="region of interest" description="Disordered" evidence="5">
    <location>
        <begin position="413"/>
        <end position="452"/>
    </location>
</feature>
<feature type="modified residue" description="Phosphoserine" evidence="2">
    <location>
        <position position="15"/>
    </location>
</feature>
<feature type="modified residue" description="Phosphoserine" evidence="2">
    <location>
        <position position="16"/>
    </location>
</feature>
<feature type="modified residue" description="Phosphoserine" evidence="13">
    <location>
        <position position="28"/>
    </location>
</feature>
<feature type="modified residue" description="Phosphoserine" evidence="13">
    <location>
        <position position="33"/>
    </location>
</feature>
<feature type="modified residue" description="Phosphoserine" evidence="2">
    <location>
        <position position="47"/>
    </location>
</feature>
<feature type="modified residue" description="Phosphothreonine" evidence="2">
    <location>
        <position position="124"/>
    </location>
</feature>
<feature type="modified residue" description="Phosphothreonine" evidence="3">
    <location>
        <position position="294"/>
    </location>
</feature>
<feature type="modified residue" description="Phosphothreonine" evidence="3">
    <location>
        <position position="316"/>
    </location>
</feature>
<feature type="cross-link" description="Glycyl lysine isopeptide (Lys-Gly) (interchain with G-Cter in SUMO2)" evidence="2">
    <location>
        <position position="293"/>
    </location>
</feature>
<feature type="cross-link" description="Glycyl lysine isopeptide (Lys-Gly) (interchain with G-Cter in SUMO1); alternate" evidence="2">
    <location>
        <position position="443"/>
    </location>
</feature>
<feature type="cross-link" description="Glycyl lysine isopeptide (Lys-Gly) (interchain with G-Cter in SUMO2); alternate" evidence="2">
    <location>
        <position position="443"/>
    </location>
</feature>
<feature type="sequence conflict" description="In Ref. 1; BAA03821." evidence="11" ref="1">
    <original>RCE</original>
    <variation>HSQ</variation>
    <location>
        <begin position="372"/>
        <end position="374"/>
    </location>
</feature>
<feature type="sequence conflict" description="In Ref. 1; BAA03821." evidence="11" ref="1">
    <original>G</original>
    <variation>D</variation>
    <location>
        <position position="405"/>
    </location>
</feature>
<feature type="sequence conflict" description="In Ref. 2; AAH57934." evidence="11" ref="2">
    <original>E</original>
    <variation>EVSLG</variation>
    <location>
        <position position="417"/>
    </location>
</feature>
<gene>
    <name type="primary">Krt15</name>
    <name type="synonym">Krt1-15</name>
</gene>
<accession>Q61414</accession>
<accession>Q6PEQ0</accession>
<reference key="1">
    <citation type="journal article" date="1994" name="Gene">
        <title>The complete sequence of the gene encoding mouse cytokeratin 15.</title>
        <authorList>
            <person name="Nozaki M."/>
            <person name="Mori M."/>
            <person name="Matsushiro A."/>
        </authorList>
    </citation>
    <scope>NUCLEOTIDE SEQUENCE [GENOMIC DNA]</scope>
    <source>
        <strain>129/Sv</strain>
        <tissue>Liver</tissue>
    </source>
</reference>
<reference key="2">
    <citation type="journal article" date="2004" name="Genome Res.">
        <title>The status, quality, and expansion of the NIH full-length cDNA project: the Mammalian Gene Collection (MGC).</title>
        <authorList>
            <consortium name="The MGC Project Team"/>
        </authorList>
    </citation>
    <scope>NUCLEOTIDE SEQUENCE [LARGE SCALE MRNA]</scope>
    <source>
        <tissue>Mammary gland</tissue>
    </source>
</reference>
<reference key="3">
    <citation type="submission" date="2009-01" db="UniProtKB">
        <authorList>
            <person name="Lubec G."/>
            <person name="Sunyer B."/>
            <person name="Chen W.-Q."/>
        </authorList>
    </citation>
    <scope>PROTEIN SEQUENCE OF 100-115; 179-185 AND 392-400</scope>
    <scope>IDENTIFICATION BY MASS SPECTROMETRY</scope>
    <source>
        <strain>OF1</strain>
        <tissue>Hippocampus</tissue>
    </source>
</reference>
<reference key="4">
    <citation type="journal article" date="1995" name="J. Cell Biol.">
        <title>The basal keratin network of stratified squamous epithelia: defining K15 function in the absence of K14.</title>
        <authorList>
            <person name="Lloyd C."/>
            <person name="Yu Q.C."/>
            <person name="Cheng J."/>
            <person name="Turksen K."/>
            <person name="Degenstein L."/>
            <person name="Hutton E."/>
            <person name="Fuchs E."/>
        </authorList>
    </citation>
    <scope>FUNCTION</scope>
    <scope>DEVELOPMENTAL STAGE</scope>
</reference>
<reference key="5">
    <citation type="journal article" date="2000" name="Exp. Cell Res.">
        <title>Suppression of keratin 15 expression by transforming growth factor beta in vitro and by cutaneous injury in vivo.</title>
        <authorList>
            <person name="Werner S."/>
            <person name="Munz B."/>
        </authorList>
    </citation>
    <scope>FUNCTION</scope>
    <scope>TISSUE SPECIFICITY</scope>
    <scope>INDUCTION</scope>
</reference>
<reference key="6">
    <citation type="journal article" date="2001" name="Mol. Biol. Cell">
        <title>Complete cytolysis and neonatal lethality in keratin 5 knockout mice reveal its fundamental role in skin integrity and in epidermolysis bullosa simplex.</title>
        <authorList>
            <person name="Peters B."/>
            <person name="Kirfel J."/>
            <person name="Bussow H."/>
            <person name="Vidal M."/>
            <person name="Magin T.M."/>
        </authorList>
    </citation>
    <scope>DEVELOPMENTAL STAGE</scope>
</reference>
<reference key="7">
    <citation type="journal article" date="2003" name="Biol. Blood Marrow Transplant.">
        <title>An epithelial target site in experimental graft-versus-host disease and cytokine-mediated cytotoxicity is defined by cytokeratin 15 expression.</title>
        <authorList>
            <person name="Whitaker-Menezes D."/>
            <person name="Jones S.C."/>
            <person name="Friedman T.M."/>
            <person name="Korngold R."/>
            <person name="Murphy G.F."/>
        </authorList>
    </citation>
    <scope>TISSUE SPECIFICITY</scope>
</reference>
<reference key="8">
    <citation type="journal article" date="2010" name="Cell">
        <title>A tissue-specific atlas of mouse protein phosphorylation and expression.</title>
        <authorList>
            <person name="Huttlin E.L."/>
            <person name="Jedrychowski M.P."/>
            <person name="Elias J.E."/>
            <person name="Goswami T."/>
            <person name="Rad R."/>
            <person name="Beausoleil S.A."/>
            <person name="Villen J."/>
            <person name="Haas W."/>
            <person name="Sowa M.E."/>
            <person name="Gygi S.P."/>
        </authorList>
    </citation>
    <scope>PHOSPHORYLATION [LARGE SCALE ANALYSIS] AT SER-28 AND SER-33</scope>
    <scope>IDENTIFICATION BY MASS SPECTROMETRY [LARGE SCALE ANALYSIS]</scope>
    <source>
        <tissue>Brown adipose tissue</tissue>
    </source>
</reference>
<reference key="9">
    <citation type="journal article" date="2014" name="J. Invest. Dermatol.">
        <title>Interaction of plectin with keratins 5 and 14: dependence on several plectin domains and keratin quaternary structure.</title>
        <authorList>
            <person name="Bouameur J.E."/>
            <person name="Favre B."/>
            <person name="Fontao L."/>
            <person name="Lingasamy P."/>
            <person name="Begre N."/>
            <person name="Borradori L."/>
        </authorList>
    </citation>
    <scope>IDENTIFICATION IN A COMPLEX WITH KRT14</scope>
    <scope>INTERACTION WITH KRT14 AND PLEC</scope>
</reference>
<organism>
    <name type="scientific">Mus musculus</name>
    <name type="common">Mouse</name>
    <dbReference type="NCBI Taxonomy" id="10090"/>
    <lineage>
        <taxon>Eukaryota</taxon>
        <taxon>Metazoa</taxon>
        <taxon>Chordata</taxon>
        <taxon>Craniata</taxon>
        <taxon>Vertebrata</taxon>
        <taxon>Euteleostomi</taxon>
        <taxon>Mammalia</taxon>
        <taxon>Eutheria</taxon>
        <taxon>Euarchontoglires</taxon>
        <taxon>Glires</taxon>
        <taxon>Rodentia</taxon>
        <taxon>Myomorpha</taxon>
        <taxon>Muroidea</taxon>
        <taxon>Muridae</taxon>
        <taxon>Murinae</taxon>
        <taxon>Mus</taxon>
        <taxon>Mus</taxon>
    </lineage>
</organism>
<name>K1C15_MOUSE</name>
<proteinExistence type="evidence at protein level"/>
<keyword id="KW-0175">Coiled coil</keyword>
<keyword id="KW-0903">Direct protein sequencing</keyword>
<keyword id="KW-0403">Intermediate filament</keyword>
<keyword id="KW-1017">Isopeptide bond</keyword>
<keyword id="KW-0416">Keratin</keyword>
<keyword id="KW-0597">Phosphoprotein</keyword>
<keyword id="KW-1185">Reference proteome</keyword>
<keyword id="KW-0832">Ubl conjugation</keyword>
<comment type="function">
    <text evidence="6 10">In the absence of KRT14, makes a bona fide, but ultrastructurally distinct keratin filament network with KRT5.</text>
</comment>
<comment type="subunit">
    <text evidence="1 9 12">Heterotetramer of two type I and two type II keratins (Probable). Forms a heterodimer with KRT14 (PubMed:24940650). Interacts with PLEC isoform 1C, when in a heterodimer with KRT14 (PubMed:24940650). Interacts with NOD2 (By similarity).</text>
</comment>
<comment type="tissue specificity">
    <text evidence="6 8">Expressed strongly in the basal cell layer at the tips of rete-like prominences (RLPs) of adult dorsal tongue, outer root sheath (ORS) of hair follicle and skin epidermis (at protein level).</text>
</comment>
<comment type="developmental stage">
    <text evidence="7 10">Expressed in the skin at birth (at protein level) (PubMed:11408584). In neonatal mice, additional expression seen in the basal layer of the cornea, forestomach and esophagus (at protein level).</text>
</comment>
<comment type="induction">
    <text evidence="6">During wound healing expression is suppressed by TGF-beta, TNF-alpha and to a lesser extent by epidermal and keratinocyte growth factors (EGF and KGF respectively).</text>
</comment>
<comment type="miscellaneous">
    <text>There are two types of cytoskeletal and microfibrillar keratin: I (acidic; 40-55 kDa) and II (neutral to basic; 56-70 kDa).</text>
</comment>
<comment type="similarity">
    <text evidence="4">Belongs to the intermediate filament family.</text>
</comment>
<protein>
    <recommendedName>
        <fullName>Keratin, type I cytoskeletal 15</fullName>
    </recommendedName>
    <alternativeName>
        <fullName>Cytokeratin-15</fullName>
        <shortName>CK-15</shortName>
    </alternativeName>
    <alternativeName>
        <fullName>Keratin-15</fullName>
        <shortName>K15</shortName>
    </alternativeName>
</protein>
<sequence>MATTFLQTSSTFGGSSTRGASLRAGGGSFGGGSLYGGGGSRSISASSARFVSSGAGGGFGGGMSCGFGGGFGGGFGGGFGGGFGDFGGGDGGLLSGNEKVTMQNLNDRLASYLDKVRALEQANTELEVKIRDWYQKQSPASPDRDYSHYFKTMEEIRDKILAATIDNSRVVLEIDNARLAADDFRLKYENELTLRQGVEADINGLRRVLDELTLARTDLEMQIEQLNEELAYLKKNHEEEMKEFSSQLAGQVNVEMDAAPGVDLTRMLAEMREQYEAIAEKNRRDVEAWFFSKTEELNKEVASNTEMIQTSKTEITDLRRTLQGLEIELQSQLSMKAGLENSLAEVECRYATQLQQIQGVITGLETQLSELRCEMEAQNQEYNMLLDIKTRLEQEIATYRNLLEGQDAKMAGIGVREGSSGGGGSSSSSSNFHISVEESVDGKVVSSRKREI</sequence>